<evidence type="ECO:0000250" key="1"/>
<evidence type="ECO:0000255" key="2">
    <source>
        <dbReference type="PROSITE-ProRule" id="PRU01081"/>
    </source>
</evidence>
<evidence type="ECO:0000256" key="3">
    <source>
        <dbReference type="SAM" id="MobiDB-lite"/>
    </source>
</evidence>
<evidence type="ECO:0000269" key="4">
    <source>
    </source>
</evidence>
<evidence type="ECO:0000269" key="5">
    <source>
    </source>
</evidence>
<evidence type="ECO:0000305" key="6"/>
<organism>
    <name type="scientific">Arabidopsis thaliana</name>
    <name type="common">Mouse-ear cress</name>
    <dbReference type="NCBI Taxonomy" id="3702"/>
    <lineage>
        <taxon>Eukaryota</taxon>
        <taxon>Viridiplantae</taxon>
        <taxon>Streptophyta</taxon>
        <taxon>Embryophyta</taxon>
        <taxon>Tracheophyta</taxon>
        <taxon>Spermatophyta</taxon>
        <taxon>Magnoliopsida</taxon>
        <taxon>eudicotyledons</taxon>
        <taxon>Gunneridae</taxon>
        <taxon>Pentapetalae</taxon>
        <taxon>rosids</taxon>
        <taxon>malvids</taxon>
        <taxon>Brassicales</taxon>
        <taxon>Brassicaceae</taxon>
        <taxon>Camelineae</taxon>
        <taxon>Arabidopsis</taxon>
    </lineage>
</organism>
<feature type="chain" id="PRO_0000112852" description="Auxin-responsive protein IAA26">
    <location>
        <begin position="1"/>
        <end position="269"/>
    </location>
</feature>
<feature type="domain" description="PB1" evidence="2">
    <location>
        <begin position="151"/>
        <end position="250"/>
    </location>
</feature>
<feature type="region of interest" description="Disordered" evidence="3">
    <location>
        <begin position="25"/>
        <end position="55"/>
    </location>
</feature>
<feature type="region of interest" description="Disordered" evidence="3">
    <location>
        <begin position="76"/>
        <end position="146"/>
    </location>
</feature>
<feature type="short sequence motif" description="EAR-like (transcriptional repression)">
    <location>
        <begin position="38"/>
        <end position="42"/>
    </location>
</feature>
<feature type="compositionally biased region" description="Basic and acidic residues" evidence="3">
    <location>
        <begin position="25"/>
        <end position="40"/>
    </location>
</feature>
<feature type="compositionally biased region" description="Polar residues" evidence="3">
    <location>
        <begin position="80"/>
        <end position="93"/>
    </location>
</feature>
<feature type="compositionally biased region" description="Polar residues" evidence="3">
    <location>
        <begin position="117"/>
        <end position="136"/>
    </location>
</feature>
<feature type="compositionally biased region" description="Basic and acidic residues" evidence="3">
    <location>
        <begin position="137"/>
        <end position="146"/>
    </location>
</feature>
<feature type="sequence conflict" description="In Ref. 1; AAC99772." evidence="6" ref="1">
    <original>GPPG</original>
    <variation>HR</variation>
    <location>
        <begin position="43"/>
        <end position="46"/>
    </location>
</feature>
<feature type="sequence conflict" description="In Ref. 5; AAM65282." evidence="6" ref="5">
    <original>D</original>
    <variation>H</variation>
    <location>
        <position position="71"/>
    </location>
</feature>
<accession>Q8LAL2</accession>
<accession>Q9LK75</accession>
<accession>Q9ZSY7</accession>
<comment type="function">
    <text evidence="4">Aux/IAA proteins are short-lived transcriptional factors that function as repressors of early auxin response genes at low auxin concentrations. Repression is thought to result from the interaction with auxin response factors (ARFs), proteins that bind to the auxin-responsive promoter element (AuxRE). Formation of heterodimers with ARF proteins may alter their ability to modulate early auxin response genes expression.</text>
</comment>
<comment type="subunit">
    <text evidence="1 5">Homodimers and heterodimers (By similarity). Interacts with phytochrome A. Interacts with TPL.</text>
</comment>
<comment type="interaction">
    <interactant intactId="EBI-3947418">
        <id>Q8LAL2</id>
    </interactant>
    <interactant intactId="EBI-3946783">
        <id>Q9C5W9</id>
        <label>ARF18</label>
    </interactant>
    <organismsDiffer>false</organismsDiffer>
    <experiments>7</experiments>
</comment>
<comment type="interaction">
    <interactant intactId="EBI-3947418">
        <id>Q8LAL2</id>
    </interactant>
    <interactant intactId="EBI-1799262">
        <id>Q94JM3</id>
        <label>ARF2</label>
    </interactant>
    <organismsDiffer>false</organismsDiffer>
    <experiments>7</experiments>
</comment>
<comment type="interaction">
    <interactant intactId="EBI-3947418">
        <id>Q8LAL2</id>
    </interactant>
    <interactant intactId="EBI-1100737">
        <id>Q8L9Y3</id>
        <label>ARR14</label>
    </interactant>
    <organismsDiffer>false</organismsDiffer>
    <experiments>3</experiments>
</comment>
<comment type="interaction">
    <interactant intactId="EBI-3947418">
        <id>Q8LAL2</id>
    </interactant>
    <interactant intactId="EBI-15194159">
        <id>Q501D3</id>
        <label>At1g01920</label>
    </interactant>
    <organismsDiffer>false</organismsDiffer>
    <experiments>3</experiments>
</comment>
<comment type="interaction">
    <interactant intactId="EBI-3947418">
        <id>Q8LAL2</id>
    </interactant>
    <interactant intactId="EBI-25523851">
        <id>Q9FIK2</id>
        <label>At5g47790</label>
    </interactant>
    <organismsDiffer>false</organismsDiffer>
    <experiments>3</experiments>
</comment>
<comment type="interaction">
    <interactant intactId="EBI-3947418">
        <id>Q8LAL2</id>
    </interactant>
    <interactant intactId="EBI-1536772">
        <id>O04292</id>
        <label>ATHB-9</label>
    </interactant>
    <organismsDiffer>false</organismsDiffer>
    <experiments>4</experiments>
</comment>
<comment type="interaction">
    <interactant intactId="EBI-3947418">
        <id>Q8LAL2</id>
    </interactant>
    <interactant intactId="EBI-446380">
        <id>Q9SQI2</id>
        <label>GI</label>
    </interactant>
    <organismsDiffer>false</organismsDiffer>
    <experiments>3</experiments>
</comment>
<comment type="interaction">
    <interactant intactId="EBI-3947418">
        <id>Q8LAL2</id>
    </interactant>
    <interactant intactId="EBI-630505">
        <id>P49677</id>
        <label>IAA1</label>
    </interactant>
    <organismsDiffer>false</organismsDiffer>
    <experiments>14</experiments>
</comment>
<comment type="interaction">
    <interactant intactId="EBI-3947418">
        <id>Q8LAL2</id>
    </interactant>
    <interactant intactId="EBI-3946434">
        <id>Q38828</id>
        <label>IAA10</label>
    </interactant>
    <organismsDiffer>false</organismsDiffer>
    <experiments>10</experiments>
</comment>
<comment type="interaction">
    <interactant intactId="EBI-3947418">
        <id>Q8LAL2</id>
    </interactant>
    <interactant intactId="EBI-2367923">
        <id>Q38829</id>
        <label>IAA11</label>
    </interactant>
    <organismsDiffer>false</organismsDiffer>
    <experiments>8</experiments>
</comment>
<comment type="interaction">
    <interactant intactId="EBI-3947418">
        <id>Q8LAL2</id>
    </interactant>
    <interactant intactId="EBI-617608">
        <id>Q38830</id>
        <label>IAA12</label>
    </interactant>
    <organismsDiffer>false</organismsDiffer>
    <experiments>3</experiments>
</comment>
<comment type="interaction">
    <interactant intactId="EBI-3947418">
        <id>Q8LAL2</id>
    </interactant>
    <interactant intactId="EBI-1554143">
        <id>Q38831</id>
        <label>IAA13</label>
    </interactant>
    <organismsDiffer>false</organismsDiffer>
    <experiments>8</experiments>
</comment>
<comment type="interaction">
    <interactant intactId="EBI-3947418">
        <id>Q8LAL2</id>
    </interactant>
    <interactant intactId="EBI-2295562">
        <id>Q38832</id>
        <label>IAA14</label>
    </interactant>
    <organismsDiffer>false</organismsDiffer>
    <experiments>4</experiments>
</comment>
<comment type="interaction">
    <interactant intactId="EBI-3947418">
        <id>Q8LAL2</id>
    </interactant>
    <interactant intactId="EBI-25524519">
        <id>A0A2H1ZEF6</id>
        <label>IAA15</label>
    </interactant>
    <organismsDiffer>false</organismsDiffer>
    <experiments>5</experiments>
</comment>
<comment type="interaction">
    <interactant intactId="EBI-3947418">
        <id>Q8LAL2</id>
    </interactant>
    <interactant intactId="EBI-632231">
        <id>O24407</id>
        <label>IAA16</label>
    </interactant>
    <organismsDiffer>false</organismsDiffer>
    <experiments>9</experiments>
</comment>
<comment type="interaction">
    <interactant intactId="EBI-3947418">
        <id>Q8LAL2</id>
    </interactant>
    <interactant intactId="EBI-632243">
        <id>P93830</id>
        <label>IAA17</label>
    </interactant>
    <organismsDiffer>false</organismsDiffer>
    <experiments>9</experiments>
</comment>
<comment type="interaction">
    <interactant intactId="EBI-3947418">
        <id>Q8LAL2</id>
    </interactant>
    <interactant intactId="EBI-2295525">
        <id>O24408</id>
        <label>IAA18</label>
    </interactant>
    <organismsDiffer>false</organismsDiffer>
    <experiments>3</experiments>
</comment>
<comment type="interaction">
    <interactant intactId="EBI-3947418">
        <id>Q8LAL2</id>
    </interactant>
    <interactant intactId="EBI-632257">
        <id>O24409</id>
        <label>IAA19</label>
    </interactant>
    <organismsDiffer>false</organismsDiffer>
    <experiments>9</experiments>
</comment>
<comment type="interaction">
    <interactant intactId="EBI-3947418">
        <id>Q8LAL2</id>
    </interactant>
    <interactant intactId="EBI-632343">
        <id>P49678</id>
        <label>IAA2</label>
    </interactant>
    <organismsDiffer>false</organismsDiffer>
    <experiments>10</experiments>
</comment>
<comment type="interaction">
    <interactant intactId="EBI-3947418">
        <id>Q8LAL2</id>
    </interactant>
    <interactant intactId="EBI-632272">
        <id>O24410</id>
        <label>IAA20</label>
    </interactant>
    <organismsDiffer>false</organismsDiffer>
    <experiments>5</experiments>
</comment>
<comment type="interaction">
    <interactant intactId="EBI-3947418">
        <id>Q8LAL2</id>
    </interactant>
    <interactant intactId="EBI-3947418">
        <id>Q8LAL2</id>
        <label>IAA26</label>
    </interactant>
    <organismsDiffer>false</organismsDiffer>
    <experiments>3</experiments>
</comment>
<comment type="interaction">
    <interactant intactId="EBI-3947418">
        <id>Q8LAL2</id>
    </interactant>
    <interactant intactId="EBI-3946677">
        <id>Q9ZSY8</id>
        <label>IAA27</label>
    </interactant>
    <organismsDiffer>false</organismsDiffer>
    <experiments>8</experiments>
</comment>
<comment type="interaction">
    <interactant intactId="EBI-3947418">
        <id>Q8LAL2</id>
    </interactant>
    <interactant intactId="EBI-3133404">
        <id>Q9XFM0</id>
        <label>IAA28</label>
    </interactant>
    <organismsDiffer>false</organismsDiffer>
    <experiments>8</experiments>
</comment>
<comment type="interaction">
    <interactant intactId="EBI-3947418">
        <id>Q8LAL2</id>
    </interactant>
    <interactant intactId="EBI-307174">
        <id>Q38822</id>
        <label>IAA3</label>
    </interactant>
    <organismsDiffer>false</organismsDiffer>
    <experiments>9</experiments>
</comment>
<comment type="interaction">
    <interactant intactId="EBI-3947418">
        <id>Q8LAL2</id>
    </interactant>
    <interactant intactId="EBI-3946408">
        <id>Q8H174</id>
        <label>IAA31</label>
    </interactant>
    <organismsDiffer>false</organismsDiffer>
    <experiments>5</experiments>
</comment>
<comment type="interaction">
    <interactant intactId="EBI-3947418">
        <id>Q8LAL2</id>
    </interactant>
    <interactant intactId="EBI-3946448">
        <id>Q8RYC6</id>
        <label>IAA32</label>
    </interactant>
    <organismsDiffer>false</organismsDiffer>
    <experiments>5</experiments>
</comment>
<comment type="interaction">
    <interactant intactId="EBI-3947418">
        <id>Q8LAL2</id>
    </interactant>
    <interactant intactId="EBI-3946739">
        <id>Q9FKM7</id>
        <label>IAA33</label>
    </interactant>
    <organismsDiffer>false</organismsDiffer>
    <experiments>5</experiments>
</comment>
<comment type="interaction">
    <interactant intactId="EBI-3947418">
        <id>Q8LAL2</id>
    </interactant>
    <interactant intactId="EBI-3946459">
        <id>Q9C5X0</id>
        <label>IAA34</label>
    </interactant>
    <organismsDiffer>false</organismsDiffer>
    <experiments>7</experiments>
</comment>
<comment type="interaction">
    <interactant intactId="EBI-3947418">
        <id>Q8LAL2</id>
    </interactant>
    <interactant intactId="EBI-632187">
        <id>P33077</id>
        <label>IAA4</label>
    </interactant>
    <organismsDiffer>false</organismsDiffer>
    <experiments>8</experiments>
</comment>
<comment type="interaction">
    <interactant intactId="EBI-3947418">
        <id>Q8LAL2</id>
    </interactant>
    <interactant intactId="EBI-3946487">
        <id>P33078</id>
        <label>IAA5</label>
    </interactant>
    <organismsDiffer>false</organismsDiffer>
    <experiments>5</experiments>
</comment>
<comment type="interaction">
    <interactant intactId="EBI-3947418">
        <id>Q8LAL2</id>
    </interactant>
    <interactant intactId="EBI-1554124">
        <id>Q38824</id>
        <label>IAA6</label>
    </interactant>
    <organismsDiffer>false</organismsDiffer>
    <experiments>8</experiments>
</comment>
<comment type="interaction">
    <interactant intactId="EBI-3947418">
        <id>Q8LAL2</id>
    </interactant>
    <interactant intactId="EBI-602959">
        <id>Q38825</id>
        <label>IAA7</label>
    </interactant>
    <organismsDiffer>false</organismsDiffer>
    <experiments>6</experiments>
</comment>
<comment type="interaction">
    <interactant intactId="EBI-3947418">
        <id>Q8LAL2</id>
    </interactant>
    <interactant intactId="EBI-632200">
        <id>Q38826</id>
        <label>IAA8</label>
    </interactant>
    <organismsDiffer>false</organismsDiffer>
    <experiments>5</experiments>
</comment>
<comment type="interaction">
    <interactant intactId="EBI-3947418">
        <id>Q8LAL2</id>
    </interactant>
    <interactant intactId="EBI-632216">
        <id>Q38827</id>
        <label>IAA9</label>
    </interactant>
    <organismsDiffer>false</organismsDiffer>
    <experiments>4</experiments>
</comment>
<comment type="interaction">
    <interactant intactId="EBI-3947418">
        <id>Q8LAL2</id>
    </interactant>
    <interactant intactId="EBI-2309089">
        <id>Q946J8</id>
        <label>LHP1</label>
    </interactant>
    <organismsDiffer>false</organismsDiffer>
    <experiments>3</experiments>
</comment>
<comment type="interaction">
    <interactant intactId="EBI-3947418">
        <id>Q8LAL2</id>
    </interactant>
    <interactant intactId="EBI-21497119">
        <id>Q9LTC4</id>
        <label>MYB15</label>
    </interactant>
    <organismsDiffer>false</organismsDiffer>
    <experiments>3</experiments>
</comment>
<comment type="interaction">
    <interactant intactId="EBI-3947418">
        <id>Q8LAL2</id>
    </interactant>
    <interactant intactId="EBI-25506855">
        <id>O23160</id>
        <label>MYB73</label>
    </interactant>
    <organismsDiffer>false</organismsDiffer>
    <experiments>3</experiments>
</comment>
<comment type="interaction">
    <interactant intactId="EBI-3947418">
        <id>Q8LAL2</id>
    </interactant>
    <interactant intactId="EBI-15193025">
        <id>Q9LXU1</id>
        <label>NOT9B</label>
    </interactant>
    <organismsDiffer>false</organismsDiffer>
    <experiments>3</experiments>
</comment>
<comment type="subcellular location">
    <subcellularLocation>
        <location evidence="1">Nucleus</location>
    </subcellularLocation>
</comment>
<comment type="induction">
    <text evidence="1">By auxin.</text>
</comment>
<comment type="domain">
    <text>The N-terminal half of the protein contains two conserved domains I and II. Domain I includes a slightly degenerated ERF-associated amphiphilic repression (EAR) motif which seems to be involved in the activity of transcriptional repression. Domain II is required for the correct degradation of the protein through the SCF-mediated ubiquitin-proteasome pathway. Interactions between Aux/IAA proteins and auxin response factors (ARFs) occur through their C-terminal dimerization domains III and IV.</text>
</comment>
<comment type="similarity">
    <text evidence="6">Belongs to the Aux/IAA family.</text>
</comment>
<name>IAA26_ARATH</name>
<dbReference type="EMBL" id="AF088281">
    <property type="protein sequence ID" value="AAC99772.1"/>
    <property type="molecule type" value="mRNA"/>
</dbReference>
<dbReference type="EMBL" id="AP000373">
    <property type="protein sequence ID" value="BAB01149.1"/>
    <property type="molecule type" value="Genomic_DNA"/>
</dbReference>
<dbReference type="EMBL" id="CP002686">
    <property type="protein sequence ID" value="AEE75827.1"/>
    <property type="molecule type" value="Genomic_DNA"/>
</dbReference>
<dbReference type="EMBL" id="AF332394">
    <property type="protein sequence ID" value="AAG48758.2"/>
    <property type="molecule type" value="mRNA"/>
</dbReference>
<dbReference type="EMBL" id="AF332401">
    <property type="protein sequence ID" value="AAG48765.1"/>
    <property type="molecule type" value="mRNA"/>
</dbReference>
<dbReference type="EMBL" id="AF386948">
    <property type="protein sequence ID" value="AAK62393.1"/>
    <property type="molecule type" value="mRNA"/>
</dbReference>
<dbReference type="EMBL" id="AY072502">
    <property type="protein sequence ID" value="AAL66917.1"/>
    <property type="molecule type" value="mRNA"/>
</dbReference>
<dbReference type="EMBL" id="AY087745">
    <property type="protein sequence ID" value="AAM65282.1"/>
    <property type="molecule type" value="mRNA"/>
</dbReference>
<dbReference type="RefSeq" id="NP_188271.1">
    <property type="nucleotide sequence ID" value="NM_112521.4"/>
</dbReference>
<dbReference type="SMR" id="Q8LAL2"/>
<dbReference type="BioGRID" id="6232">
    <property type="interactions" value="61"/>
</dbReference>
<dbReference type="ELM" id="Q8LAL2"/>
<dbReference type="FunCoup" id="Q8LAL2">
    <property type="interactions" value="1252"/>
</dbReference>
<dbReference type="IntAct" id="Q8LAL2">
    <property type="interactions" value="52"/>
</dbReference>
<dbReference type="STRING" id="3702.Q8LAL2"/>
<dbReference type="PaxDb" id="3702-AT3G16500.1"/>
<dbReference type="ProteomicsDB" id="232159"/>
<dbReference type="EnsemblPlants" id="AT3G16500.1">
    <property type="protein sequence ID" value="AT3G16500.1"/>
    <property type="gene ID" value="AT3G16500"/>
</dbReference>
<dbReference type="GeneID" id="820898"/>
<dbReference type="Gramene" id="AT3G16500.1">
    <property type="protein sequence ID" value="AT3G16500.1"/>
    <property type="gene ID" value="AT3G16500"/>
</dbReference>
<dbReference type="KEGG" id="ath:AT3G16500"/>
<dbReference type="Araport" id="AT3G16500"/>
<dbReference type="TAIR" id="AT3G16500">
    <property type="gene designation" value="PAP1"/>
</dbReference>
<dbReference type="eggNOG" id="ENOG502QPYY">
    <property type="taxonomic scope" value="Eukaryota"/>
</dbReference>
<dbReference type="HOGENOM" id="CLU_049393_2_1_1"/>
<dbReference type="InParanoid" id="Q8LAL2"/>
<dbReference type="OrthoDB" id="615826at2759"/>
<dbReference type="PhylomeDB" id="Q8LAL2"/>
<dbReference type="PRO" id="PR:Q8LAL2"/>
<dbReference type="Proteomes" id="UP000006548">
    <property type="component" value="Chromosome 3"/>
</dbReference>
<dbReference type="ExpressionAtlas" id="Q8LAL2">
    <property type="expression patterns" value="baseline and differential"/>
</dbReference>
<dbReference type="GO" id="GO:0005634">
    <property type="term" value="C:nucleus"/>
    <property type="evidence" value="ECO:0007669"/>
    <property type="project" value="UniProtKB-SubCell"/>
</dbReference>
<dbReference type="GO" id="GO:0003700">
    <property type="term" value="F:DNA-binding transcription factor activity"/>
    <property type="evidence" value="ECO:0000250"/>
    <property type="project" value="TAIR"/>
</dbReference>
<dbReference type="GO" id="GO:0042802">
    <property type="term" value="F:identical protein binding"/>
    <property type="evidence" value="ECO:0000353"/>
    <property type="project" value="IntAct"/>
</dbReference>
<dbReference type="GO" id="GO:0009734">
    <property type="term" value="P:auxin-activated signaling pathway"/>
    <property type="evidence" value="ECO:0007669"/>
    <property type="project" value="UniProtKB-KW"/>
</dbReference>
<dbReference type="GO" id="GO:0009733">
    <property type="term" value="P:response to auxin"/>
    <property type="evidence" value="ECO:0000304"/>
    <property type="project" value="TAIR"/>
</dbReference>
<dbReference type="FunFam" id="3.10.20.90:FF:000225">
    <property type="entry name" value="Auxin-responsive protein"/>
    <property type="match status" value="1"/>
</dbReference>
<dbReference type="Gene3D" id="3.10.20.90">
    <property type="entry name" value="Phosphatidylinositol 3-kinase Catalytic Subunit, Chain A, domain 1"/>
    <property type="match status" value="1"/>
</dbReference>
<dbReference type="InterPro" id="IPR033389">
    <property type="entry name" value="AUX/IAA_dom"/>
</dbReference>
<dbReference type="InterPro" id="IPR003311">
    <property type="entry name" value="AUX_IAA"/>
</dbReference>
<dbReference type="InterPro" id="IPR053793">
    <property type="entry name" value="PB1-like"/>
</dbReference>
<dbReference type="PANTHER" id="PTHR31734">
    <property type="entry name" value="AUXIN-RESPONSIVE PROTEIN IAA17"/>
    <property type="match status" value="1"/>
</dbReference>
<dbReference type="PANTHER" id="PTHR31734:SF2">
    <property type="entry name" value="AUXIN-RESPONSIVE PROTEIN IAA26"/>
    <property type="match status" value="1"/>
</dbReference>
<dbReference type="Pfam" id="PF02309">
    <property type="entry name" value="AUX_IAA"/>
    <property type="match status" value="1"/>
</dbReference>
<dbReference type="SUPFAM" id="SSF54277">
    <property type="entry name" value="CAD &amp; PB1 domains"/>
    <property type="match status" value="1"/>
</dbReference>
<dbReference type="PROSITE" id="PS51745">
    <property type="entry name" value="PB1"/>
    <property type="match status" value="1"/>
</dbReference>
<protein>
    <recommendedName>
        <fullName>Auxin-responsive protein IAA26</fullName>
    </recommendedName>
    <alternativeName>
        <fullName>Indoleacetic acid-induced protein 26</fullName>
    </alternativeName>
    <alternativeName>
        <fullName>Phytochrome-associated protein 1</fullName>
    </alternativeName>
</protein>
<reference key="1">
    <citation type="submission" date="1998-08" db="EMBL/GenBank/DDBJ databases">
        <title>Identification and characterization of three phytochrome-associated proteins.</title>
        <authorList>
            <person name="Lee J."/>
            <person name="Yi H."/>
            <person name="Shin B."/>
            <person name="Song P.-S."/>
            <person name="Choi G."/>
        </authorList>
    </citation>
    <scope>NUCLEOTIDE SEQUENCE [MRNA]</scope>
    <source>
        <strain>cv. Columbia</strain>
    </source>
</reference>
<reference key="2">
    <citation type="journal article" date="2000" name="DNA Res.">
        <title>Structural analysis of Arabidopsis thaliana chromosome 3. II. Sequence features of the 4,251,695 bp regions covered by 90 P1, TAC and BAC clones.</title>
        <authorList>
            <person name="Kaneko T."/>
            <person name="Katoh T."/>
            <person name="Sato S."/>
            <person name="Nakamura Y."/>
            <person name="Asamizu E."/>
            <person name="Tabata S."/>
        </authorList>
    </citation>
    <scope>NUCLEOTIDE SEQUENCE [LARGE SCALE GENOMIC DNA]</scope>
    <source>
        <strain>cv. Columbia</strain>
    </source>
</reference>
<reference key="3">
    <citation type="journal article" date="2017" name="Plant J.">
        <title>Araport11: a complete reannotation of the Arabidopsis thaliana reference genome.</title>
        <authorList>
            <person name="Cheng C.Y."/>
            <person name="Krishnakumar V."/>
            <person name="Chan A.P."/>
            <person name="Thibaud-Nissen F."/>
            <person name="Schobel S."/>
            <person name="Town C.D."/>
        </authorList>
    </citation>
    <scope>GENOME REANNOTATION</scope>
    <source>
        <strain>cv. Columbia</strain>
    </source>
</reference>
<reference key="4">
    <citation type="journal article" date="2003" name="Science">
        <title>Empirical analysis of transcriptional activity in the Arabidopsis genome.</title>
        <authorList>
            <person name="Yamada K."/>
            <person name="Lim J."/>
            <person name="Dale J.M."/>
            <person name="Chen H."/>
            <person name="Shinn P."/>
            <person name="Palm C.J."/>
            <person name="Southwick A.M."/>
            <person name="Wu H.C."/>
            <person name="Kim C.J."/>
            <person name="Nguyen M."/>
            <person name="Pham P.K."/>
            <person name="Cheuk R.F."/>
            <person name="Karlin-Newmann G."/>
            <person name="Liu S.X."/>
            <person name="Lam B."/>
            <person name="Sakano H."/>
            <person name="Wu T."/>
            <person name="Yu G."/>
            <person name="Miranda M."/>
            <person name="Quach H.L."/>
            <person name="Tripp M."/>
            <person name="Chang C.H."/>
            <person name="Lee J.M."/>
            <person name="Toriumi M.J."/>
            <person name="Chan M.M."/>
            <person name="Tang C.C."/>
            <person name="Onodera C.S."/>
            <person name="Deng J.M."/>
            <person name="Akiyama K."/>
            <person name="Ansari Y."/>
            <person name="Arakawa T."/>
            <person name="Banh J."/>
            <person name="Banno F."/>
            <person name="Bowser L."/>
            <person name="Brooks S.Y."/>
            <person name="Carninci P."/>
            <person name="Chao Q."/>
            <person name="Choy N."/>
            <person name="Enju A."/>
            <person name="Goldsmith A.D."/>
            <person name="Gurjal M."/>
            <person name="Hansen N.F."/>
            <person name="Hayashizaki Y."/>
            <person name="Johnson-Hopson C."/>
            <person name="Hsuan V.W."/>
            <person name="Iida K."/>
            <person name="Karnes M."/>
            <person name="Khan S."/>
            <person name="Koesema E."/>
            <person name="Ishida J."/>
            <person name="Jiang P.X."/>
            <person name="Jones T."/>
            <person name="Kawai J."/>
            <person name="Kamiya A."/>
            <person name="Meyers C."/>
            <person name="Nakajima M."/>
            <person name="Narusaka M."/>
            <person name="Seki M."/>
            <person name="Sakurai T."/>
            <person name="Satou M."/>
            <person name="Tamse R."/>
            <person name="Vaysberg M."/>
            <person name="Wallender E.K."/>
            <person name="Wong C."/>
            <person name="Yamamura Y."/>
            <person name="Yuan S."/>
            <person name="Shinozaki K."/>
            <person name="Davis R.W."/>
            <person name="Theologis A."/>
            <person name="Ecker J.R."/>
        </authorList>
    </citation>
    <scope>NUCLEOTIDE SEQUENCE [LARGE SCALE MRNA]</scope>
    <source>
        <strain>cv. Columbia</strain>
    </source>
</reference>
<reference key="5">
    <citation type="submission" date="2002-03" db="EMBL/GenBank/DDBJ databases">
        <title>Full-length cDNA from Arabidopsis thaliana.</title>
        <authorList>
            <person name="Brover V.V."/>
            <person name="Troukhan M.E."/>
            <person name="Alexandrov N.A."/>
            <person name="Lu Y.-P."/>
            <person name="Flavell R.B."/>
            <person name="Feldmann K.A."/>
        </authorList>
    </citation>
    <scope>NUCLEOTIDE SEQUENCE [LARGE SCALE MRNA]</scope>
</reference>
<reference key="6">
    <citation type="journal article" date="2002" name="Plant Mol. Biol.">
        <title>Genetics of Aux/IAA and ARF action in plant growth and development.</title>
        <authorList>
            <person name="Liscum E."/>
            <person name="Reed J.W."/>
        </authorList>
    </citation>
    <scope>GENE FAMILY</scope>
    <scope>NOMENCLATURE</scope>
    <scope>FUNCTION</scope>
</reference>
<reference key="7">
    <citation type="journal article" date="2004" name="Plant Cell">
        <title>Aux/IAA proteins contain a potent transcriptional repression domain.</title>
        <authorList>
            <person name="Tiwari S.B."/>
            <person name="Hagen G."/>
            <person name="Guilfoyle T.J."/>
        </authorList>
    </citation>
    <scope>TRANSCRIPTIONAL REPRESSION DOMAIN</scope>
</reference>
<reference key="8">
    <citation type="journal article" date="2008" name="Science">
        <title>TOPLESS mediates auxin-dependent transcriptional repression during Arabidopsis embryogenesis.</title>
        <authorList>
            <person name="Szemenyei H."/>
            <person name="Hannon M."/>
            <person name="Long J.A."/>
        </authorList>
    </citation>
    <scope>INTERACTION WITH TPL</scope>
</reference>
<keyword id="KW-0927">Auxin signaling pathway</keyword>
<keyword id="KW-0539">Nucleus</keyword>
<keyword id="KW-1185">Reference proteome</keyword>
<keyword id="KW-0678">Repressor</keyword>
<keyword id="KW-0804">Transcription</keyword>
<keyword id="KW-0805">Transcription regulation</keyword>
<sequence>MEGCPRNREIGPKLLDLIPQGRKWYQEDKNNTDQEKKLELRLGPPGGDEEDHSAIKKKNTEIRNIKKETEDKSFHCFNGNHFSPSNKTTSVPHISQKRTAPGPVVGWPPVRSFRKNLASTSSSKLGNESSHGGQINKSDDGEKQVETKKEGMFVKINMDGVPIGRKVDLNAYNSYEQLSFVVDKLFRGLLAAQRDISDGQGEEKPIIGLLDGKGEFTLTYEDNEGDKMLVGDVPWQMFVSSVKRLRVIKSSEISSALTFGCSKQEKMMH</sequence>
<gene>
    <name type="primary">IAA26</name>
    <name type="synonym">PAP1</name>
    <name type="ordered locus">At3g16500</name>
    <name type="ORF">MDC8.13</name>
</gene>
<proteinExistence type="evidence at protein level"/>